<keyword id="KW-0963">Cytoplasm</keyword>
<keyword id="KW-0274">FAD</keyword>
<keyword id="KW-0285">Flavoprotein</keyword>
<keyword id="KW-0520">NAD</keyword>
<keyword id="KW-0560">Oxidoreductase</keyword>
<keyword id="KW-1185">Reference proteome</keyword>
<dbReference type="EC" id="1.18.1.-" evidence="1"/>
<dbReference type="EMBL" id="AE005174">
    <property type="protein sequence ID" value="AAG57818.1"/>
    <property type="molecule type" value="Genomic_DNA"/>
</dbReference>
<dbReference type="EMBL" id="BA000007">
    <property type="protein sequence ID" value="BAB36990.1"/>
    <property type="molecule type" value="Genomic_DNA"/>
</dbReference>
<dbReference type="PIR" id="F85919">
    <property type="entry name" value="F85919"/>
</dbReference>
<dbReference type="PIR" id="G91074">
    <property type="entry name" value="G91074"/>
</dbReference>
<dbReference type="RefSeq" id="NP_311594.1">
    <property type="nucleotide sequence ID" value="NC_002695.1"/>
</dbReference>
<dbReference type="RefSeq" id="WP_000064701.1">
    <property type="nucleotide sequence ID" value="NZ_VOAI01000003.1"/>
</dbReference>
<dbReference type="SMR" id="Q8X850"/>
<dbReference type="STRING" id="155864.Z4019"/>
<dbReference type="GeneID" id="914711"/>
<dbReference type="KEGG" id="ece:Z4019"/>
<dbReference type="KEGG" id="ecs:ECs_3567"/>
<dbReference type="PATRIC" id="fig|386585.9.peg.3727"/>
<dbReference type="eggNOG" id="COG0446">
    <property type="taxonomic scope" value="Bacteria"/>
</dbReference>
<dbReference type="HOGENOM" id="CLU_003291_4_4_6"/>
<dbReference type="OMA" id="IHHFWTF"/>
<dbReference type="UniPathway" id="UPA00638"/>
<dbReference type="Proteomes" id="UP000000558">
    <property type="component" value="Chromosome"/>
</dbReference>
<dbReference type="Proteomes" id="UP000002519">
    <property type="component" value="Chromosome"/>
</dbReference>
<dbReference type="GO" id="GO:0005737">
    <property type="term" value="C:cytoplasm"/>
    <property type="evidence" value="ECO:0007669"/>
    <property type="project" value="UniProtKB-SubCell"/>
</dbReference>
<dbReference type="GO" id="GO:0016731">
    <property type="term" value="F:oxidoreductase activity, acting on iron-sulfur proteins as donors, NAD or NADP as acceptor"/>
    <property type="evidence" value="ECO:0007669"/>
    <property type="project" value="UniProtKB-UniRule"/>
</dbReference>
<dbReference type="FunFam" id="3.30.390.120:FF:000001">
    <property type="entry name" value="Nitric oxide reductase FlRd-NAD(+) reductase"/>
    <property type="match status" value="1"/>
</dbReference>
<dbReference type="FunFam" id="3.50.50.60:FF:000075">
    <property type="entry name" value="Nitric oxide reductase FlRd-NAD(+) reductase"/>
    <property type="match status" value="1"/>
</dbReference>
<dbReference type="Gene3D" id="3.30.390.120">
    <property type="match status" value="1"/>
</dbReference>
<dbReference type="Gene3D" id="3.50.50.60">
    <property type="entry name" value="FAD/NAD(P)-binding domain"/>
    <property type="match status" value="2"/>
</dbReference>
<dbReference type="HAMAP" id="MF_01313">
    <property type="entry name" value="NorW"/>
    <property type="match status" value="1"/>
</dbReference>
<dbReference type="InterPro" id="IPR050260">
    <property type="entry name" value="FAD-bd_OxRdtase"/>
</dbReference>
<dbReference type="InterPro" id="IPR036188">
    <property type="entry name" value="FAD/NAD-bd_sf"/>
</dbReference>
<dbReference type="InterPro" id="IPR023753">
    <property type="entry name" value="FAD/NAD-binding_dom"/>
</dbReference>
<dbReference type="InterPro" id="IPR023961">
    <property type="entry name" value="NO_rdtase_NorW"/>
</dbReference>
<dbReference type="InterPro" id="IPR041364">
    <property type="entry name" value="Rbx-bd"/>
</dbReference>
<dbReference type="NCBIfam" id="NF003437">
    <property type="entry name" value="PRK04965.1"/>
    <property type="match status" value="1"/>
</dbReference>
<dbReference type="PANTHER" id="PTHR43429:SF3">
    <property type="entry name" value="NITRITE REDUCTASE [NAD(P)H]"/>
    <property type="match status" value="1"/>
</dbReference>
<dbReference type="PANTHER" id="PTHR43429">
    <property type="entry name" value="PYRIDINE NUCLEOTIDE-DISULFIDE OXIDOREDUCTASE DOMAIN-CONTAINING"/>
    <property type="match status" value="1"/>
</dbReference>
<dbReference type="Pfam" id="PF07992">
    <property type="entry name" value="Pyr_redox_2"/>
    <property type="match status" value="1"/>
</dbReference>
<dbReference type="Pfam" id="PF18113">
    <property type="entry name" value="Rbx_binding"/>
    <property type="match status" value="1"/>
</dbReference>
<dbReference type="PRINTS" id="PR00368">
    <property type="entry name" value="FADPNR"/>
</dbReference>
<dbReference type="PRINTS" id="PR00411">
    <property type="entry name" value="PNDRDTASEI"/>
</dbReference>
<dbReference type="SUPFAM" id="SSF51905">
    <property type="entry name" value="FAD/NAD(P)-binding domain"/>
    <property type="match status" value="1"/>
</dbReference>
<proteinExistence type="inferred from homology"/>
<feature type="chain" id="PRO_0000167664" description="Nitric oxide reductase FlRd-NAD(+) reductase">
    <location>
        <begin position="1"/>
        <end position="377"/>
    </location>
</feature>
<evidence type="ECO:0000255" key="1">
    <source>
        <dbReference type="HAMAP-Rule" id="MF_01313"/>
    </source>
</evidence>
<comment type="function">
    <text evidence="1">One of at least two accessory proteins for anaerobic nitric oxide (NO) reductase. Reduces the rubredoxin moiety of NO reductase.</text>
</comment>
<comment type="catalytic activity">
    <reaction evidence="1">
        <text>2 reduced [nitric oxide reductase rubredoxin domain] + NAD(+) + H(+) = 2 oxidized [nitric oxide reductase rubredoxin domain] + NADH</text>
        <dbReference type="Rhea" id="RHEA:42960"/>
        <dbReference type="Rhea" id="RHEA-COMP:10304"/>
        <dbReference type="Rhea" id="RHEA-COMP:10305"/>
        <dbReference type="ChEBI" id="CHEBI:15378"/>
        <dbReference type="ChEBI" id="CHEBI:29033"/>
        <dbReference type="ChEBI" id="CHEBI:29034"/>
        <dbReference type="ChEBI" id="CHEBI:57540"/>
        <dbReference type="ChEBI" id="CHEBI:57945"/>
    </reaction>
</comment>
<comment type="cofactor">
    <cofactor evidence="1">
        <name>FAD</name>
        <dbReference type="ChEBI" id="CHEBI:57692"/>
    </cofactor>
</comment>
<comment type="pathway">
    <text evidence="1">Nitrogen metabolism; nitric oxide reduction.</text>
</comment>
<comment type="subcellular location">
    <subcellularLocation>
        <location evidence="1">Cytoplasm</location>
    </subcellularLocation>
</comment>
<comment type="similarity">
    <text evidence="1">Belongs to the FAD-dependent oxidoreductase family.</text>
</comment>
<organism>
    <name type="scientific">Escherichia coli O157:H7</name>
    <dbReference type="NCBI Taxonomy" id="83334"/>
    <lineage>
        <taxon>Bacteria</taxon>
        <taxon>Pseudomonadati</taxon>
        <taxon>Pseudomonadota</taxon>
        <taxon>Gammaproteobacteria</taxon>
        <taxon>Enterobacterales</taxon>
        <taxon>Enterobacteriaceae</taxon>
        <taxon>Escherichia</taxon>
    </lineage>
</organism>
<sequence length="377" mass="41303">MSNGIVIIGSGFAARQLVKNIRKQDASIPLTLIAADSMDEYNKPDLSHVISQGQRADDLTRQTAGEFAEQFNLLLFPQTWVTDIDAEARVVKSQNNQWQYDKLVLATGASAFVPPVPGRELMLTLNSQQEYRACETQLRDARRVLIVGGGLIGSELAMDFCRAGKMVTLIDNAASILASLMPPEVSSRLQHRLTEMGVHLLLKSQLQGLEKTDSGILATLDHQRSIEVDAVIAATGLRPETALARRAGLTINRGVCVDSYLQTSNADIYALGDCAEINGQVLPFLQPIQLSAMVLAKNLLGNNTPLKLPAMLVKIKTPELPLHLAGETQRQDLRWQINTERQGMVARGVDDADQLRAFVVSEDRMKEAFGLLKTLPV</sequence>
<reference key="1">
    <citation type="journal article" date="2001" name="Nature">
        <title>Genome sequence of enterohaemorrhagic Escherichia coli O157:H7.</title>
        <authorList>
            <person name="Perna N.T."/>
            <person name="Plunkett G. III"/>
            <person name="Burland V."/>
            <person name="Mau B."/>
            <person name="Glasner J.D."/>
            <person name="Rose D.J."/>
            <person name="Mayhew G.F."/>
            <person name="Evans P.S."/>
            <person name="Gregor J."/>
            <person name="Kirkpatrick H.A."/>
            <person name="Posfai G."/>
            <person name="Hackett J."/>
            <person name="Klink S."/>
            <person name="Boutin A."/>
            <person name="Shao Y."/>
            <person name="Miller L."/>
            <person name="Grotbeck E.J."/>
            <person name="Davis N.W."/>
            <person name="Lim A."/>
            <person name="Dimalanta E.T."/>
            <person name="Potamousis K."/>
            <person name="Apodaca J."/>
            <person name="Anantharaman T.S."/>
            <person name="Lin J."/>
            <person name="Yen G."/>
            <person name="Schwartz D.C."/>
            <person name="Welch R.A."/>
            <person name="Blattner F.R."/>
        </authorList>
    </citation>
    <scope>NUCLEOTIDE SEQUENCE [LARGE SCALE GENOMIC DNA]</scope>
    <source>
        <strain>O157:H7 / EDL933 / ATCC 700927 / EHEC</strain>
    </source>
</reference>
<reference key="2">
    <citation type="journal article" date="2001" name="DNA Res.">
        <title>Complete genome sequence of enterohemorrhagic Escherichia coli O157:H7 and genomic comparison with a laboratory strain K-12.</title>
        <authorList>
            <person name="Hayashi T."/>
            <person name="Makino K."/>
            <person name="Ohnishi M."/>
            <person name="Kurokawa K."/>
            <person name="Ishii K."/>
            <person name="Yokoyama K."/>
            <person name="Han C.-G."/>
            <person name="Ohtsubo E."/>
            <person name="Nakayama K."/>
            <person name="Murata T."/>
            <person name="Tanaka M."/>
            <person name="Tobe T."/>
            <person name="Iida T."/>
            <person name="Takami H."/>
            <person name="Honda T."/>
            <person name="Sasakawa C."/>
            <person name="Ogasawara N."/>
            <person name="Yasunaga T."/>
            <person name="Kuhara S."/>
            <person name="Shiba T."/>
            <person name="Hattori M."/>
            <person name="Shinagawa H."/>
        </authorList>
    </citation>
    <scope>NUCLEOTIDE SEQUENCE [LARGE SCALE GENOMIC DNA]</scope>
    <source>
        <strain>O157:H7 / Sakai / RIMD 0509952 / EHEC</strain>
    </source>
</reference>
<protein>
    <recommendedName>
        <fullName evidence="1">Nitric oxide reductase FlRd-NAD(+) reductase</fullName>
        <ecNumber evidence="1">1.18.1.-</ecNumber>
    </recommendedName>
    <alternativeName>
        <fullName evidence="1">Flavorubredoxin reductase</fullName>
        <shortName evidence="1">FlRd-reductase</shortName>
        <shortName evidence="1">FlavoRb reductase</shortName>
    </alternativeName>
</protein>
<name>NORW_ECO57</name>
<gene>
    <name evidence="1" type="primary">norW</name>
    <name evidence="1" type="synonym">flrR</name>
    <name type="ordered locus">Z4019</name>
    <name type="ordered locus">ECs3567</name>
</gene>
<accession>Q8X850</accession>